<evidence type="ECO:0000255" key="1">
    <source>
        <dbReference type="HAMAP-Rule" id="MF_00455"/>
    </source>
</evidence>
<accession>A4WVT8</accession>
<keyword id="KW-0119">Carbohydrate metabolism</keyword>
<keyword id="KW-0963">Cytoplasm</keyword>
<keyword id="KW-0413">Isomerase</keyword>
<keyword id="KW-0460">Magnesium</keyword>
<keyword id="KW-0479">Metal-binding</keyword>
<keyword id="KW-0859">Xylose metabolism</keyword>
<feature type="chain" id="PRO_1000026453" description="Xylose isomerase">
    <location>
        <begin position="1"/>
        <end position="433"/>
    </location>
</feature>
<feature type="active site" evidence="1">
    <location>
        <position position="99"/>
    </location>
</feature>
<feature type="active site" evidence="1">
    <location>
        <position position="102"/>
    </location>
</feature>
<feature type="binding site" evidence="1">
    <location>
        <position position="230"/>
    </location>
    <ligand>
        <name>Mg(2+)</name>
        <dbReference type="ChEBI" id="CHEBI:18420"/>
        <label>1</label>
    </ligand>
</feature>
<feature type="binding site" evidence="1">
    <location>
        <position position="266"/>
    </location>
    <ligand>
        <name>Mg(2+)</name>
        <dbReference type="ChEBI" id="CHEBI:18420"/>
        <label>1</label>
    </ligand>
</feature>
<feature type="binding site" evidence="1">
    <location>
        <position position="266"/>
    </location>
    <ligand>
        <name>Mg(2+)</name>
        <dbReference type="ChEBI" id="CHEBI:18420"/>
        <label>2</label>
    </ligand>
</feature>
<feature type="binding site" evidence="1">
    <location>
        <position position="269"/>
    </location>
    <ligand>
        <name>Mg(2+)</name>
        <dbReference type="ChEBI" id="CHEBI:18420"/>
        <label>2</label>
    </ligand>
</feature>
<feature type="binding site" evidence="1">
    <location>
        <position position="294"/>
    </location>
    <ligand>
        <name>Mg(2+)</name>
        <dbReference type="ChEBI" id="CHEBI:18420"/>
        <label>1</label>
    </ligand>
</feature>
<feature type="binding site" evidence="1">
    <location>
        <position position="305"/>
    </location>
    <ligand>
        <name>Mg(2+)</name>
        <dbReference type="ChEBI" id="CHEBI:18420"/>
        <label>2</label>
    </ligand>
</feature>
<feature type="binding site" evidence="1">
    <location>
        <position position="307"/>
    </location>
    <ligand>
        <name>Mg(2+)</name>
        <dbReference type="ChEBI" id="CHEBI:18420"/>
        <label>2</label>
    </ligand>
</feature>
<feature type="binding site" evidence="1">
    <location>
        <position position="337"/>
    </location>
    <ligand>
        <name>Mg(2+)</name>
        <dbReference type="ChEBI" id="CHEBI:18420"/>
        <label>1</label>
    </ligand>
</feature>
<reference key="1">
    <citation type="submission" date="2007-04" db="EMBL/GenBank/DDBJ databases">
        <title>Complete sequence of chromosome of Rhodobacter sphaeroides ATCC 17025.</title>
        <authorList>
            <consortium name="US DOE Joint Genome Institute"/>
            <person name="Copeland A."/>
            <person name="Lucas S."/>
            <person name="Lapidus A."/>
            <person name="Barry K."/>
            <person name="Detter J.C."/>
            <person name="Glavina del Rio T."/>
            <person name="Hammon N."/>
            <person name="Israni S."/>
            <person name="Dalin E."/>
            <person name="Tice H."/>
            <person name="Pitluck S."/>
            <person name="Chertkov O."/>
            <person name="Brettin T."/>
            <person name="Bruce D."/>
            <person name="Han C."/>
            <person name="Schmutz J."/>
            <person name="Larimer F."/>
            <person name="Land M."/>
            <person name="Hauser L."/>
            <person name="Kyrpides N."/>
            <person name="Kim E."/>
            <person name="Richardson P."/>
            <person name="Mackenzie C."/>
            <person name="Choudhary M."/>
            <person name="Donohue T.J."/>
            <person name="Kaplan S."/>
        </authorList>
    </citation>
    <scope>NUCLEOTIDE SEQUENCE [LARGE SCALE GENOMIC DNA]</scope>
    <source>
        <strain>ATCC 17025 / ATH 2.4.3</strain>
    </source>
</reference>
<dbReference type="EC" id="5.3.1.5" evidence="1"/>
<dbReference type="EMBL" id="CP000661">
    <property type="protein sequence ID" value="ABP71502.1"/>
    <property type="molecule type" value="Genomic_DNA"/>
</dbReference>
<dbReference type="SMR" id="A4WVT8"/>
<dbReference type="STRING" id="349102.Rsph17025_2615"/>
<dbReference type="KEGG" id="rsq:Rsph17025_2615"/>
<dbReference type="eggNOG" id="COG2115">
    <property type="taxonomic scope" value="Bacteria"/>
</dbReference>
<dbReference type="HOGENOM" id="CLU_037261_1_0_5"/>
<dbReference type="BioCyc" id="RSPH349102:G1G8M-2695-MONOMER"/>
<dbReference type="GO" id="GO:0005737">
    <property type="term" value="C:cytoplasm"/>
    <property type="evidence" value="ECO:0007669"/>
    <property type="project" value="UniProtKB-SubCell"/>
</dbReference>
<dbReference type="GO" id="GO:0000287">
    <property type="term" value="F:magnesium ion binding"/>
    <property type="evidence" value="ECO:0007669"/>
    <property type="project" value="UniProtKB-UniRule"/>
</dbReference>
<dbReference type="GO" id="GO:0009045">
    <property type="term" value="F:xylose isomerase activity"/>
    <property type="evidence" value="ECO:0007669"/>
    <property type="project" value="UniProtKB-UniRule"/>
</dbReference>
<dbReference type="GO" id="GO:0042732">
    <property type="term" value="P:D-xylose metabolic process"/>
    <property type="evidence" value="ECO:0007669"/>
    <property type="project" value="UniProtKB-UniRule"/>
</dbReference>
<dbReference type="Gene3D" id="3.20.20.150">
    <property type="entry name" value="Divalent-metal-dependent TIM barrel enzymes"/>
    <property type="match status" value="1"/>
</dbReference>
<dbReference type="HAMAP" id="MF_00455">
    <property type="entry name" value="Xylose_isom_A"/>
    <property type="match status" value="1"/>
</dbReference>
<dbReference type="InterPro" id="IPR036237">
    <property type="entry name" value="Xyl_isomerase-like_sf"/>
</dbReference>
<dbReference type="InterPro" id="IPR013452">
    <property type="entry name" value="Xylose_isom_bac"/>
</dbReference>
<dbReference type="InterPro" id="IPR001998">
    <property type="entry name" value="Xylose_isomerase"/>
</dbReference>
<dbReference type="NCBIfam" id="NF003998">
    <property type="entry name" value="PRK05474.1"/>
    <property type="match status" value="1"/>
</dbReference>
<dbReference type="NCBIfam" id="TIGR02630">
    <property type="entry name" value="xylose_isom_A"/>
    <property type="match status" value="1"/>
</dbReference>
<dbReference type="PANTHER" id="PTHR48408">
    <property type="match status" value="1"/>
</dbReference>
<dbReference type="PANTHER" id="PTHR48408:SF1">
    <property type="entry name" value="XYLOSE ISOMERASE"/>
    <property type="match status" value="1"/>
</dbReference>
<dbReference type="PRINTS" id="PR00688">
    <property type="entry name" value="XYLOSISMRASE"/>
</dbReference>
<dbReference type="SUPFAM" id="SSF51658">
    <property type="entry name" value="Xylose isomerase-like"/>
    <property type="match status" value="1"/>
</dbReference>
<dbReference type="PROSITE" id="PS51415">
    <property type="entry name" value="XYLOSE_ISOMERASE"/>
    <property type="match status" value="1"/>
</dbReference>
<gene>
    <name evidence="1" type="primary">xylA</name>
    <name type="ordered locus">Rsph17025_2615</name>
</gene>
<organism>
    <name type="scientific">Cereibacter sphaeroides (strain ATCC 17025 / ATH 2.4.3)</name>
    <name type="common">Rhodobacter sphaeroides</name>
    <dbReference type="NCBI Taxonomy" id="349102"/>
    <lineage>
        <taxon>Bacteria</taxon>
        <taxon>Pseudomonadati</taxon>
        <taxon>Pseudomonadota</taxon>
        <taxon>Alphaproteobacteria</taxon>
        <taxon>Rhodobacterales</taxon>
        <taxon>Paracoccaceae</taxon>
        <taxon>Cereibacter</taxon>
    </lineage>
</organism>
<protein>
    <recommendedName>
        <fullName evidence="1">Xylose isomerase</fullName>
        <ecNumber evidence="1">5.3.1.5</ecNumber>
    </recommendedName>
</protein>
<proteinExistence type="inferred from homology"/>
<comment type="catalytic activity">
    <reaction evidence="1">
        <text>alpha-D-xylose = alpha-D-xylulofuranose</text>
        <dbReference type="Rhea" id="RHEA:22816"/>
        <dbReference type="ChEBI" id="CHEBI:28518"/>
        <dbReference type="ChEBI" id="CHEBI:188998"/>
        <dbReference type="EC" id="5.3.1.5"/>
    </reaction>
</comment>
<comment type="cofactor">
    <cofactor evidence="1">
        <name>Mg(2+)</name>
        <dbReference type="ChEBI" id="CHEBI:18420"/>
    </cofactor>
    <text evidence="1">Binds 2 magnesium ions per subunit.</text>
</comment>
<comment type="subunit">
    <text evidence="1">Homotetramer.</text>
</comment>
<comment type="subcellular location">
    <subcellularLocation>
        <location evidence="1">Cytoplasm</location>
    </subcellularLocation>
</comment>
<comment type="similarity">
    <text evidence="1">Belongs to the xylose isomerase family.</text>
</comment>
<name>XYLA_CERS5</name>
<sequence>MTDFFAGIPQIRYEGEGSSNEFAYRHYNPDEMILGKRMEDHLRFAVAWWHSFAWPGGDPFGAQTLERPWFGDTLDLARMKADVAFEMFEILGAPFFCFHDADIRPEGATFAESKRNLEAIVDHIGARMERSKTRLLWGTANLFSHRRFMSGAATNPDPDVFAWSAATVKACMDATKKLGGANYVLWGGREGYETLLNTDLKREAEQAGRFLQMVVDYKYKIGFEGTILIEPKPQEPSKHQYDYDVATVYGFLKRFGLENEVKLNVEQGHAILAGHSFEHELALAASLGILGSIDMNRNDYQSGWDTDQFPNNHPEMALAYYEVLRAGGFTTGGTNFDAKIRRQSLDPEDLILAHVGGMDTCARALKAAARLYEDGSLERARADRYAGWETPEAKAMLSSSLEEIEARVLAEDINPQPRSGRQERLENLWNRFV</sequence>